<proteinExistence type="inferred from homology"/>
<keyword id="KW-0056">Arginine metabolism</keyword>
<keyword id="KW-0378">Hydrolase</keyword>
<keyword id="KW-0479">Metal-binding</keyword>
<keyword id="KW-0862">Zinc</keyword>
<gene>
    <name evidence="1" type="primary">astE</name>
    <name type="ordered locus">Pfl01_4279</name>
</gene>
<accession>Q3K888</accession>
<name>ASTE_PSEPF</name>
<comment type="function">
    <text evidence="1">Transforms N(2)-succinylglutamate into succinate and glutamate.</text>
</comment>
<comment type="catalytic activity">
    <reaction evidence="1">
        <text>N-succinyl-L-glutamate + H2O = L-glutamate + succinate</text>
        <dbReference type="Rhea" id="RHEA:15169"/>
        <dbReference type="ChEBI" id="CHEBI:15377"/>
        <dbReference type="ChEBI" id="CHEBI:29985"/>
        <dbReference type="ChEBI" id="CHEBI:30031"/>
        <dbReference type="ChEBI" id="CHEBI:58763"/>
        <dbReference type="EC" id="3.5.1.96"/>
    </reaction>
</comment>
<comment type="cofactor">
    <cofactor evidence="1">
        <name>Zn(2+)</name>
        <dbReference type="ChEBI" id="CHEBI:29105"/>
    </cofactor>
    <text evidence="1">Binds 1 zinc ion per subunit.</text>
</comment>
<comment type="pathway">
    <text evidence="1">Amino-acid degradation; L-arginine degradation via AST pathway; L-glutamate and succinate from L-arginine: step 5/5.</text>
</comment>
<comment type="similarity">
    <text evidence="1">Belongs to the AspA/AstE family. Succinylglutamate desuccinylase subfamily.</text>
</comment>
<organism>
    <name type="scientific">Pseudomonas fluorescens (strain Pf0-1)</name>
    <dbReference type="NCBI Taxonomy" id="205922"/>
    <lineage>
        <taxon>Bacteria</taxon>
        <taxon>Pseudomonadati</taxon>
        <taxon>Pseudomonadota</taxon>
        <taxon>Gammaproteobacteria</taxon>
        <taxon>Pseudomonadales</taxon>
        <taxon>Pseudomonadaceae</taxon>
        <taxon>Pseudomonas</taxon>
    </lineage>
</organism>
<evidence type="ECO:0000255" key="1">
    <source>
        <dbReference type="HAMAP-Rule" id="MF_00767"/>
    </source>
</evidence>
<reference key="1">
    <citation type="journal article" date="2009" name="Genome Biol.">
        <title>Genomic and genetic analyses of diversity and plant interactions of Pseudomonas fluorescens.</title>
        <authorList>
            <person name="Silby M.W."/>
            <person name="Cerdeno-Tarraga A.M."/>
            <person name="Vernikos G.S."/>
            <person name="Giddens S.R."/>
            <person name="Jackson R.W."/>
            <person name="Preston G.M."/>
            <person name="Zhang X.-X."/>
            <person name="Moon C.D."/>
            <person name="Gehrig S.M."/>
            <person name="Godfrey S.A.C."/>
            <person name="Knight C.G."/>
            <person name="Malone J.G."/>
            <person name="Robinson Z."/>
            <person name="Spiers A.J."/>
            <person name="Harris S."/>
            <person name="Challis G.L."/>
            <person name="Yaxley A.M."/>
            <person name="Harris D."/>
            <person name="Seeger K."/>
            <person name="Murphy L."/>
            <person name="Rutter S."/>
            <person name="Squares R."/>
            <person name="Quail M.A."/>
            <person name="Saunders E."/>
            <person name="Mavromatis K."/>
            <person name="Brettin T.S."/>
            <person name="Bentley S.D."/>
            <person name="Hothersall J."/>
            <person name="Stephens E."/>
            <person name="Thomas C.M."/>
            <person name="Parkhill J."/>
            <person name="Levy S.B."/>
            <person name="Rainey P.B."/>
            <person name="Thomson N.R."/>
        </authorList>
    </citation>
    <scope>NUCLEOTIDE SEQUENCE [LARGE SCALE GENOMIC DNA]</scope>
    <source>
        <strain>Pf0-1</strain>
    </source>
</reference>
<sequence length="336" mass="37592">MLALGKLLELTLAGREPAEKTQLTVEGVRMRWLSEGALEVRPPEARDNGLDLLLSAGIHGNETAPIELLDRLLHDIARGDLKPRARILFLFGNPEAIRKGERFVEQDVNRLFNGRHEQSSGSEALRACELERLAASFFSLPDRQRLHYDLHTAIRGSKIEQFALYPWKEGRQHSRLELARLRAAGMEAVLLQNKPSIVFSSYTYDKLGAESFTLELGKARPFGQNAGVNVSLLETRLKQIIEGTEPEMAEQGLDGLQLFSVAREIIKHSDAFRLNLPADIENFSELDVGYVLAEDLANTRWIIEEQGARIIFPNPKVKNGLRAGILIVPTTDENLA</sequence>
<dbReference type="EC" id="3.5.1.96" evidence="1"/>
<dbReference type="EMBL" id="CP000094">
    <property type="protein sequence ID" value="ABA76016.1"/>
    <property type="molecule type" value="Genomic_DNA"/>
</dbReference>
<dbReference type="RefSeq" id="WP_007951052.1">
    <property type="nucleotide sequence ID" value="NC_007492.2"/>
</dbReference>
<dbReference type="SMR" id="Q3K888"/>
<dbReference type="KEGG" id="pfo:Pfl01_4279"/>
<dbReference type="eggNOG" id="COG2988">
    <property type="taxonomic scope" value="Bacteria"/>
</dbReference>
<dbReference type="HOGENOM" id="CLU_071608_0_0_6"/>
<dbReference type="UniPathway" id="UPA00185">
    <property type="reaction ID" value="UER00283"/>
</dbReference>
<dbReference type="Proteomes" id="UP000002704">
    <property type="component" value="Chromosome"/>
</dbReference>
<dbReference type="GO" id="GO:0016788">
    <property type="term" value="F:hydrolase activity, acting on ester bonds"/>
    <property type="evidence" value="ECO:0007669"/>
    <property type="project" value="UniProtKB-UniRule"/>
</dbReference>
<dbReference type="GO" id="GO:0009017">
    <property type="term" value="F:succinylglutamate desuccinylase activity"/>
    <property type="evidence" value="ECO:0007669"/>
    <property type="project" value="UniProtKB-EC"/>
</dbReference>
<dbReference type="GO" id="GO:0008270">
    <property type="term" value="F:zinc ion binding"/>
    <property type="evidence" value="ECO:0007669"/>
    <property type="project" value="UniProtKB-UniRule"/>
</dbReference>
<dbReference type="GO" id="GO:0019544">
    <property type="term" value="P:arginine catabolic process to glutamate"/>
    <property type="evidence" value="ECO:0007669"/>
    <property type="project" value="UniProtKB-UniRule"/>
</dbReference>
<dbReference type="GO" id="GO:0019545">
    <property type="term" value="P:arginine catabolic process to succinate"/>
    <property type="evidence" value="ECO:0007669"/>
    <property type="project" value="UniProtKB-UniRule"/>
</dbReference>
<dbReference type="CDD" id="cd03855">
    <property type="entry name" value="M14_ASTE"/>
    <property type="match status" value="1"/>
</dbReference>
<dbReference type="Gene3D" id="3.40.630.10">
    <property type="entry name" value="Zn peptidases"/>
    <property type="match status" value="1"/>
</dbReference>
<dbReference type="HAMAP" id="MF_00767">
    <property type="entry name" value="Arg_catab_AstE"/>
    <property type="match status" value="1"/>
</dbReference>
<dbReference type="InterPro" id="IPR050178">
    <property type="entry name" value="AspA/AstE_fam"/>
</dbReference>
<dbReference type="InterPro" id="IPR055438">
    <property type="entry name" value="AstE_AspA_cat"/>
</dbReference>
<dbReference type="InterPro" id="IPR007036">
    <property type="entry name" value="Aste_AspA_hybrid_dom"/>
</dbReference>
<dbReference type="InterPro" id="IPR016681">
    <property type="entry name" value="SuccinylGlu_desuccinylase"/>
</dbReference>
<dbReference type="NCBIfam" id="TIGR03242">
    <property type="entry name" value="arg_catab_astE"/>
    <property type="match status" value="1"/>
</dbReference>
<dbReference type="NCBIfam" id="NF003706">
    <property type="entry name" value="PRK05324.1"/>
    <property type="match status" value="1"/>
</dbReference>
<dbReference type="PANTHER" id="PTHR15162">
    <property type="entry name" value="ASPARTOACYLASE"/>
    <property type="match status" value="1"/>
</dbReference>
<dbReference type="PANTHER" id="PTHR15162:SF7">
    <property type="entry name" value="SUCCINYLGLUTAMATE DESUCCINYLASE"/>
    <property type="match status" value="1"/>
</dbReference>
<dbReference type="Pfam" id="PF24827">
    <property type="entry name" value="AstE_AspA_cat"/>
    <property type="match status" value="1"/>
</dbReference>
<dbReference type="Pfam" id="PF04952">
    <property type="entry name" value="AstE_AspA_hybrid"/>
    <property type="match status" value="1"/>
</dbReference>
<dbReference type="PIRSF" id="PIRSF017020">
    <property type="entry name" value="AstE"/>
    <property type="match status" value="1"/>
</dbReference>
<dbReference type="SUPFAM" id="SSF53187">
    <property type="entry name" value="Zn-dependent exopeptidases"/>
    <property type="match status" value="1"/>
</dbReference>
<feature type="chain" id="PRO_0000257716" description="Succinylglutamate desuccinylase">
    <location>
        <begin position="1"/>
        <end position="336"/>
    </location>
</feature>
<feature type="active site" evidence="1">
    <location>
        <position position="215"/>
    </location>
</feature>
<feature type="binding site" evidence="1">
    <location>
        <position position="59"/>
    </location>
    <ligand>
        <name>Zn(2+)</name>
        <dbReference type="ChEBI" id="CHEBI:29105"/>
    </ligand>
</feature>
<feature type="binding site" evidence="1">
    <location>
        <position position="62"/>
    </location>
    <ligand>
        <name>Zn(2+)</name>
        <dbReference type="ChEBI" id="CHEBI:29105"/>
    </ligand>
</feature>
<feature type="binding site" evidence="1">
    <location>
        <position position="151"/>
    </location>
    <ligand>
        <name>Zn(2+)</name>
        <dbReference type="ChEBI" id="CHEBI:29105"/>
    </ligand>
</feature>
<protein>
    <recommendedName>
        <fullName evidence="1">Succinylglutamate desuccinylase</fullName>
        <ecNumber evidence="1">3.5.1.96</ecNumber>
    </recommendedName>
</protein>